<comment type="function">
    <text evidence="1">Catalyzes the attachment of tyrosine to tRNA(Tyr) in a two-step reaction: tyrosine is first activated by ATP to form Tyr-AMP and then transferred to the acceptor end of tRNA(Tyr).</text>
</comment>
<comment type="catalytic activity">
    <reaction evidence="1">
        <text>tRNA(Tyr) + L-tyrosine + ATP = L-tyrosyl-tRNA(Tyr) + AMP + diphosphate + H(+)</text>
        <dbReference type="Rhea" id="RHEA:10220"/>
        <dbReference type="Rhea" id="RHEA-COMP:9706"/>
        <dbReference type="Rhea" id="RHEA-COMP:9707"/>
        <dbReference type="ChEBI" id="CHEBI:15378"/>
        <dbReference type="ChEBI" id="CHEBI:30616"/>
        <dbReference type="ChEBI" id="CHEBI:33019"/>
        <dbReference type="ChEBI" id="CHEBI:58315"/>
        <dbReference type="ChEBI" id="CHEBI:78442"/>
        <dbReference type="ChEBI" id="CHEBI:78536"/>
        <dbReference type="ChEBI" id="CHEBI:456215"/>
        <dbReference type="EC" id="6.1.1.1"/>
    </reaction>
</comment>
<comment type="subunit">
    <text evidence="1">Homodimer.</text>
</comment>
<comment type="subcellular location">
    <subcellularLocation>
        <location evidence="1">Cytoplasm</location>
    </subcellularLocation>
</comment>
<comment type="similarity">
    <text evidence="1">Belongs to the class-I aminoacyl-tRNA synthetase family. TyrS type 1 subfamily.</text>
</comment>
<sequence>MPNAPEVNSVWDELLWRGLVCVSTDQGALKELLDGPPIRFYCGFDPTAPSLHVGNLAQILIMRRLQLAGHRPIALVGGSTGLIGDPRPGGERQLHSHEQVQEWVRALQQQLSRFLDFKGAAAAVLVNNLDWTKSLTALDFLRELGKHFRVNAMLKKDAVAARLSSTEGISYTEFSYQILQSLDFRQLYLDYKCVLQIGGSDQWGNITSGVDLIRKTEGAGVHAFGSPLLTASDGSKFGKTEGNAIWLDADLTSPWSFYQFFLNSDDADIPRLLRVFTFFTRSEIEDLNRSVRENASARLAHRHLAYSVTRLVHGADVADQVLLACSVLFGDGGALGKTQTGLPRIDSDTLNDSSGVTTIKAQDNTYTPYSPEGVRFAGTFPVDPRFLRSILFELPNATVSAHDLITHILQKVGLCRSLSEARRLISQGGIYVNNIKVTCPDALLDSFLDNSMPIRAAILRKGKKHLAAVFY</sequence>
<organism>
    <name type="scientific">Tropheryma whipplei (strain TW08/27)</name>
    <name type="common">Whipple's bacillus</name>
    <dbReference type="NCBI Taxonomy" id="218496"/>
    <lineage>
        <taxon>Bacteria</taxon>
        <taxon>Bacillati</taxon>
        <taxon>Actinomycetota</taxon>
        <taxon>Actinomycetes</taxon>
        <taxon>Micrococcales</taxon>
        <taxon>Tropherymataceae</taxon>
        <taxon>Tropheryma</taxon>
    </lineage>
</organism>
<accession>Q83HH5</accession>
<evidence type="ECO:0000255" key="1">
    <source>
        <dbReference type="HAMAP-Rule" id="MF_02006"/>
    </source>
</evidence>
<keyword id="KW-0030">Aminoacyl-tRNA synthetase</keyword>
<keyword id="KW-0067">ATP-binding</keyword>
<keyword id="KW-0963">Cytoplasm</keyword>
<keyword id="KW-0436">Ligase</keyword>
<keyword id="KW-0547">Nucleotide-binding</keyword>
<keyword id="KW-0648">Protein biosynthesis</keyword>
<keyword id="KW-0694">RNA-binding</keyword>
<reference key="1">
    <citation type="journal article" date="2003" name="Lancet">
        <title>Sequencing and analysis of the genome of the Whipple's disease bacterium Tropheryma whipplei.</title>
        <authorList>
            <person name="Bentley S.D."/>
            <person name="Maiwald M."/>
            <person name="Murphy L.D."/>
            <person name="Pallen M.J."/>
            <person name="Yeats C.A."/>
            <person name="Dover L.G."/>
            <person name="Norbertczak H.T."/>
            <person name="Besra G.S."/>
            <person name="Quail M.A."/>
            <person name="Harris D.E."/>
            <person name="von Herbay A."/>
            <person name="Goble A."/>
            <person name="Rutter S."/>
            <person name="Squares R."/>
            <person name="Squares S."/>
            <person name="Barrell B.G."/>
            <person name="Parkhill J."/>
            <person name="Relman D.A."/>
        </authorList>
    </citation>
    <scope>NUCLEOTIDE SEQUENCE [LARGE SCALE GENOMIC DNA]</scope>
    <source>
        <strain>TW08/27</strain>
    </source>
</reference>
<gene>
    <name evidence="1" type="primary">tyrS</name>
    <name type="ordered locus">TW603</name>
</gene>
<feature type="chain" id="PRO_0000234805" description="Tyrosine--tRNA ligase">
    <location>
        <begin position="1"/>
        <end position="471"/>
    </location>
</feature>
<feature type="domain" description="S4 RNA-binding" evidence="1">
    <location>
        <begin position="403"/>
        <end position="471"/>
    </location>
</feature>
<feature type="short sequence motif" description="'HIGH' region">
    <location>
        <begin position="46"/>
        <end position="55"/>
    </location>
</feature>
<feature type="short sequence motif" description="'KMSKS' region">
    <location>
        <begin position="236"/>
        <end position="240"/>
    </location>
</feature>
<feature type="binding site" evidence="1">
    <location>
        <position position="41"/>
    </location>
    <ligand>
        <name>L-tyrosine</name>
        <dbReference type="ChEBI" id="CHEBI:58315"/>
    </ligand>
</feature>
<feature type="binding site" evidence="1">
    <location>
        <position position="176"/>
    </location>
    <ligand>
        <name>L-tyrosine</name>
        <dbReference type="ChEBI" id="CHEBI:58315"/>
    </ligand>
</feature>
<feature type="binding site" evidence="1">
    <location>
        <position position="180"/>
    </location>
    <ligand>
        <name>L-tyrosine</name>
        <dbReference type="ChEBI" id="CHEBI:58315"/>
    </ligand>
</feature>
<feature type="binding site" evidence="1">
    <location>
        <position position="239"/>
    </location>
    <ligand>
        <name>ATP</name>
        <dbReference type="ChEBI" id="CHEBI:30616"/>
    </ligand>
</feature>
<protein>
    <recommendedName>
        <fullName evidence="1">Tyrosine--tRNA ligase</fullName>
        <ecNumber evidence="1">6.1.1.1</ecNumber>
    </recommendedName>
    <alternativeName>
        <fullName evidence="1">Tyrosyl-tRNA synthetase</fullName>
        <shortName evidence="1">TyrRS</shortName>
    </alternativeName>
</protein>
<dbReference type="EC" id="6.1.1.1" evidence="1"/>
<dbReference type="EMBL" id="BX251412">
    <property type="protein sequence ID" value="CAD67268.1"/>
    <property type="molecule type" value="Genomic_DNA"/>
</dbReference>
<dbReference type="RefSeq" id="WP_011096548.1">
    <property type="nucleotide sequence ID" value="NC_004551.1"/>
</dbReference>
<dbReference type="SMR" id="Q83HH5"/>
<dbReference type="GeneID" id="67388385"/>
<dbReference type="KEGG" id="tws:TW603"/>
<dbReference type="HOGENOM" id="CLU_024003_0_3_11"/>
<dbReference type="GO" id="GO:0005829">
    <property type="term" value="C:cytosol"/>
    <property type="evidence" value="ECO:0007669"/>
    <property type="project" value="TreeGrafter"/>
</dbReference>
<dbReference type="GO" id="GO:0005524">
    <property type="term" value="F:ATP binding"/>
    <property type="evidence" value="ECO:0007669"/>
    <property type="project" value="UniProtKB-UniRule"/>
</dbReference>
<dbReference type="GO" id="GO:0003723">
    <property type="term" value="F:RNA binding"/>
    <property type="evidence" value="ECO:0007669"/>
    <property type="project" value="UniProtKB-KW"/>
</dbReference>
<dbReference type="GO" id="GO:0004831">
    <property type="term" value="F:tyrosine-tRNA ligase activity"/>
    <property type="evidence" value="ECO:0007669"/>
    <property type="project" value="UniProtKB-UniRule"/>
</dbReference>
<dbReference type="GO" id="GO:0006437">
    <property type="term" value="P:tyrosyl-tRNA aminoacylation"/>
    <property type="evidence" value="ECO:0007669"/>
    <property type="project" value="UniProtKB-UniRule"/>
</dbReference>
<dbReference type="CDD" id="cd00165">
    <property type="entry name" value="S4"/>
    <property type="match status" value="1"/>
</dbReference>
<dbReference type="CDD" id="cd00805">
    <property type="entry name" value="TyrRS_core"/>
    <property type="match status" value="1"/>
</dbReference>
<dbReference type="FunFam" id="1.10.240.10:FF:000001">
    <property type="entry name" value="Tyrosine--tRNA ligase"/>
    <property type="match status" value="1"/>
</dbReference>
<dbReference type="Gene3D" id="3.40.50.620">
    <property type="entry name" value="HUPs"/>
    <property type="match status" value="1"/>
</dbReference>
<dbReference type="Gene3D" id="3.10.290.10">
    <property type="entry name" value="RNA-binding S4 domain"/>
    <property type="match status" value="1"/>
</dbReference>
<dbReference type="Gene3D" id="1.10.240.10">
    <property type="entry name" value="Tyrosyl-Transfer RNA Synthetase"/>
    <property type="match status" value="1"/>
</dbReference>
<dbReference type="HAMAP" id="MF_02006">
    <property type="entry name" value="Tyr_tRNA_synth_type1"/>
    <property type="match status" value="1"/>
</dbReference>
<dbReference type="InterPro" id="IPR001412">
    <property type="entry name" value="aa-tRNA-synth_I_CS"/>
</dbReference>
<dbReference type="InterPro" id="IPR002305">
    <property type="entry name" value="aa-tRNA-synth_Ic"/>
</dbReference>
<dbReference type="InterPro" id="IPR014729">
    <property type="entry name" value="Rossmann-like_a/b/a_fold"/>
</dbReference>
<dbReference type="InterPro" id="IPR036986">
    <property type="entry name" value="S4_RNA-bd_sf"/>
</dbReference>
<dbReference type="InterPro" id="IPR054608">
    <property type="entry name" value="SYY-like_C"/>
</dbReference>
<dbReference type="InterPro" id="IPR002307">
    <property type="entry name" value="Tyr-tRNA-ligase"/>
</dbReference>
<dbReference type="InterPro" id="IPR024088">
    <property type="entry name" value="Tyr-tRNA-ligase_bac-type"/>
</dbReference>
<dbReference type="InterPro" id="IPR024107">
    <property type="entry name" value="Tyr-tRNA-ligase_bac_1"/>
</dbReference>
<dbReference type="NCBIfam" id="TIGR00234">
    <property type="entry name" value="tyrS"/>
    <property type="match status" value="1"/>
</dbReference>
<dbReference type="PANTHER" id="PTHR11766:SF0">
    <property type="entry name" value="TYROSINE--TRNA LIGASE, MITOCHONDRIAL"/>
    <property type="match status" value="1"/>
</dbReference>
<dbReference type="PANTHER" id="PTHR11766">
    <property type="entry name" value="TYROSYL-TRNA SYNTHETASE"/>
    <property type="match status" value="1"/>
</dbReference>
<dbReference type="Pfam" id="PF22421">
    <property type="entry name" value="SYY_C-terminal"/>
    <property type="match status" value="1"/>
</dbReference>
<dbReference type="Pfam" id="PF00579">
    <property type="entry name" value="tRNA-synt_1b"/>
    <property type="match status" value="1"/>
</dbReference>
<dbReference type="PRINTS" id="PR01040">
    <property type="entry name" value="TRNASYNTHTYR"/>
</dbReference>
<dbReference type="SUPFAM" id="SSF55174">
    <property type="entry name" value="Alpha-L RNA-binding motif"/>
    <property type="match status" value="1"/>
</dbReference>
<dbReference type="SUPFAM" id="SSF52374">
    <property type="entry name" value="Nucleotidylyl transferase"/>
    <property type="match status" value="1"/>
</dbReference>
<dbReference type="PROSITE" id="PS00178">
    <property type="entry name" value="AA_TRNA_LIGASE_I"/>
    <property type="match status" value="1"/>
</dbReference>
<dbReference type="PROSITE" id="PS50889">
    <property type="entry name" value="S4"/>
    <property type="match status" value="1"/>
</dbReference>
<proteinExistence type="inferred from homology"/>
<name>SYY_TROW8</name>